<sequence>MPRCPSPSHAIIDLSAIAANLAVVRKRAGDRKVLFAVKADAYGHGAVEVSRYVEKHRYADWLAVATVAEGQELVEAGITLPILKLSPADPWDMDAAITSGIRLTVVDFDTLEAVSKAAVRLGITAKIHIAVDSGMGRIGLRPECLAELTAAADRAKGVEVEGVFTHLPISDVPEGAEFTRREIDTFMTAVSLIETHRGPFPLVHLANSGAILGHDLGKTSMVRAGIVGYGYDPNPHADRADLHPALSWISHVTFVKTVSVGDTIGYGRTWTASETTKIATVPVGYADGLSRGLSNKGHVLIRGSVHPIVGRICMDQFMVDLGPDSNVTVGDEVVLIGTQEDETLTADDMAELLGTISYEITCAISKRVDRYWVGQ</sequence>
<comment type="function">
    <text evidence="1">Catalyzes the interconversion of L-alanine and D-alanine. May also act on other amino acids.</text>
</comment>
<comment type="catalytic activity">
    <reaction evidence="1">
        <text>L-alanine = D-alanine</text>
        <dbReference type="Rhea" id="RHEA:20249"/>
        <dbReference type="ChEBI" id="CHEBI:57416"/>
        <dbReference type="ChEBI" id="CHEBI:57972"/>
        <dbReference type="EC" id="5.1.1.1"/>
    </reaction>
</comment>
<comment type="cofactor">
    <cofactor evidence="1">
        <name>pyridoxal 5'-phosphate</name>
        <dbReference type="ChEBI" id="CHEBI:597326"/>
    </cofactor>
</comment>
<comment type="pathway">
    <text evidence="1">Amino-acid biosynthesis; D-alanine biosynthesis; D-alanine from L-alanine: step 1/1.</text>
</comment>
<comment type="similarity">
    <text evidence="1">Belongs to the alanine racemase family.</text>
</comment>
<reference key="1">
    <citation type="journal article" date="2004" name="Science">
        <title>The complete genome sequence of Propionibacterium acnes, a commensal of human skin.</title>
        <authorList>
            <person name="Brueggemann H."/>
            <person name="Henne A."/>
            <person name="Hoster F."/>
            <person name="Liesegang H."/>
            <person name="Wiezer A."/>
            <person name="Strittmatter A."/>
            <person name="Hujer S."/>
            <person name="Duerre P."/>
            <person name="Gottschalk G."/>
        </authorList>
    </citation>
    <scope>NUCLEOTIDE SEQUENCE [LARGE SCALE GENOMIC DNA]</scope>
    <source>
        <strain>DSM 16379 / KPA171202</strain>
    </source>
</reference>
<accession>Q6A5H2</accession>
<gene>
    <name type="primary">alr</name>
    <name type="ordered locus">PPA2285</name>
</gene>
<proteinExistence type="inferred from homology"/>
<name>ALR_CUTAK</name>
<organism>
    <name type="scientific">Cutibacterium acnes (strain DSM 16379 / KPA171202)</name>
    <name type="common">Propionibacterium acnes</name>
    <dbReference type="NCBI Taxonomy" id="267747"/>
    <lineage>
        <taxon>Bacteria</taxon>
        <taxon>Bacillati</taxon>
        <taxon>Actinomycetota</taxon>
        <taxon>Actinomycetes</taxon>
        <taxon>Propionibacteriales</taxon>
        <taxon>Propionibacteriaceae</taxon>
        <taxon>Cutibacterium</taxon>
    </lineage>
</organism>
<evidence type="ECO:0000255" key="1">
    <source>
        <dbReference type="HAMAP-Rule" id="MF_01201"/>
    </source>
</evidence>
<dbReference type="EC" id="5.1.1.1" evidence="1"/>
<dbReference type="EMBL" id="AE017283">
    <property type="protein sequence ID" value="AAT83991.1"/>
    <property type="molecule type" value="Genomic_DNA"/>
</dbReference>
<dbReference type="RefSeq" id="WP_002515851.1">
    <property type="nucleotide sequence ID" value="NZ_CP025935.1"/>
</dbReference>
<dbReference type="SMR" id="Q6A5H2"/>
<dbReference type="EnsemblBacteria" id="AAT83991">
    <property type="protein sequence ID" value="AAT83991"/>
    <property type="gene ID" value="PPA2285"/>
</dbReference>
<dbReference type="GeneID" id="92858225"/>
<dbReference type="KEGG" id="pac:PPA2285"/>
<dbReference type="eggNOG" id="COG0787">
    <property type="taxonomic scope" value="Bacteria"/>
</dbReference>
<dbReference type="HOGENOM" id="CLU_028393_2_2_11"/>
<dbReference type="UniPathway" id="UPA00042">
    <property type="reaction ID" value="UER00497"/>
</dbReference>
<dbReference type="Proteomes" id="UP000000603">
    <property type="component" value="Chromosome"/>
</dbReference>
<dbReference type="GO" id="GO:0005829">
    <property type="term" value="C:cytosol"/>
    <property type="evidence" value="ECO:0007669"/>
    <property type="project" value="TreeGrafter"/>
</dbReference>
<dbReference type="GO" id="GO:0008784">
    <property type="term" value="F:alanine racemase activity"/>
    <property type="evidence" value="ECO:0007669"/>
    <property type="project" value="UniProtKB-UniRule"/>
</dbReference>
<dbReference type="GO" id="GO:0030170">
    <property type="term" value="F:pyridoxal phosphate binding"/>
    <property type="evidence" value="ECO:0007669"/>
    <property type="project" value="UniProtKB-UniRule"/>
</dbReference>
<dbReference type="GO" id="GO:0030632">
    <property type="term" value="P:D-alanine biosynthetic process"/>
    <property type="evidence" value="ECO:0007669"/>
    <property type="project" value="UniProtKB-UniRule"/>
</dbReference>
<dbReference type="CDD" id="cd00430">
    <property type="entry name" value="PLPDE_III_AR"/>
    <property type="match status" value="1"/>
</dbReference>
<dbReference type="FunFam" id="2.40.37.10:FF:000006">
    <property type="entry name" value="Alanine racemase"/>
    <property type="match status" value="1"/>
</dbReference>
<dbReference type="FunFam" id="3.20.20.10:FF:000002">
    <property type="entry name" value="Alanine racemase"/>
    <property type="match status" value="1"/>
</dbReference>
<dbReference type="Gene3D" id="3.20.20.10">
    <property type="entry name" value="Alanine racemase"/>
    <property type="match status" value="1"/>
</dbReference>
<dbReference type="Gene3D" id="2.40.37.10">
    <property type="entry name" value="Lyase, Ornithine Decarboxylase, Chain A, domain 1"/>
    <property type="match status" value="1"/>
</dbReference>
<dbReference type="HAMAP" id="MF_01201">
    <property type="entry name" value="Ala_racemase"/>
    <property type="match status" value="1"/>
</dbReference>
<dbReference type="InterPro" id="IPR000821">
    <property type="entry name" value="Ala_racemase"/>
</dbReference>
<dbReference type="InterPro" id="IPR009006">
    <property type="entry name" value="Ala_racemase/Decarboxylase_C"/>
</dbReference>
<dbReference type="InterPro" id="IPR011079">
    <property type="entry name" value="Ala_racemase_C"/>
</dbReference>
<dbReference type="InterPro" id="IPR001608">
    <property type="entry name" value="Ala_racemase_N"/>
</dbReference>
<dbReference type="InterPro" id="IPR020622">
    <property type="entry name" value="Ala_racemase_pyridoxalP-BS"/>
</dbReference>
<dbReference type="InterPro" id="IPR029066">
    <property type="entry name" value="PLP-binding_barrel"/>
</dbReference>
<dbReference type="NCBIfam" id="TIGR00492">
    <property type="entry name" value="alr"/>
    <property type="match status" value="1"/>
</dbReference>
<dbReference type="PANTHER" id="PTHR30511">
    <property type="entry name" value="ALANINE RACEMASE"/>
    <property type="match status" value="1"/>
</dbReference>
<dbReference type="PANTHER" id="PTHR30511:SF0">
    <property type="entry name" value="ALANINE RACEMASE, CATABOLIC-RELATED"/>
    <property type="match status" value="1"/>
</dbReference>
<dbReference type="Pfam" id="PF00842">
    <property type="entry name" value="Ala_racemase_C"/>
    <property type="match status" value="1"/>
</dbReference>
<dbReference type="Pfam" id="PF01168">
    <property type="entry name" value="Ala_racemase_N"/>
    <property type="match status" value="1"/>
</dbReference>
<dbReference type="PRINTS" id="PR00992">
    <property type="entry name" value="ALARACEMASE"/>
</dbReference>
<dbReference type="SMART" id="SM01005">
    <property type="entry name" value="Ala_racemase_C"/>
    <property type="match status" value="1"/>
</dbReference>
<dbReference type="SUPFAM" id="SSF50621">
    <property type="entry name" value="Alanine racemase C-terminal domain-like"/>
    <property type="match status" value="1"/>
</dbReference>
<dbReference type="SUPFAM" id="SSF51419">
    <property type="entry name" value="PLP-binding barrel"/>
    <property type="match status" value="1"/>
</dbReference>
<dbReference type="PROSITE" id="PS00395">
    <property type="entry name" value="ALANINE_RACEMASE"/>
    <property type="match status" value="1"/>
</dbReference>
<feature type="chain" id="PRO_1000213839" description="Alanine racemase">
    <location>
        <begin position="1"/>
        <end position="375"/>
    </location>
</feature>
<feature type="active site" description="Proton acceptor; specific for D-alanine" evidence="1">
    <location>
        <position position="38"/>
    </location>
</feature>
<feature type="active site" description="Proton acceptor; specific for L-alanine" evidence="1">
    <location>
        <position position="266"/>
    </location>
</feature>
<feature type="binding site" evidence="1">
    <location>
        <position position="137"/>
    </location>
    <ligand>
        <name>substrate</name>
    </ligand>
</feature>
<feature type="binding site" evidence="1">
    <location>
        <position position="314"/>
    </location>
    <ligand>
        <name>substrate</name>
    </ligand>
</feature>
<feature type="modified residue" description="N6-(pyridoxal phosphate)lysine" evidence="1">
    <location>
        <position position="38"/>
    </location>
</feature>
<protein>
    <recommendedName>
        <fullName evidence="1">Alanine racemase</fullName>
        <ecNumber evidence="1">5.1.1.1</ecNumber>
    </recommendedName>
</protein>
<keyword id="KW-0413">Isomerase</keyword>
<keyword id="KW-0663">Pyridoxal phosphate</keyword>